<accession>Q9CYX7</accession>
<accession>Q8BU28</accession>
<accession>Q922T8</accession>
<accession>Q9CWJ2</accession>
<accession>Q9D8W8</accession>
<gene>
    <name type="primary">Rrp15</name>
</gene>
<dbReference type="EMBL" id="AK007616">
    <property type="protein sequence ID" value="BAB25137.2"/>
    <property type="molecule type" value="mRNA"/>
</dbReference>
<dbReference type="EMBL" id="AK010658">
    <property type="protein sequence ID" value="BAB27096.1"/>
    <property type="molecule type" value="mRNA"/>
</dbReference>
<dbReference type="EMBL" id="AK013217">
    <property type="protein sequence ID" value="BAB28719.2"/>
    <property type="molecule type" value="mRNA"/>
</dbReference>
<dbReference type="EMBL" id="AK087997">
    <property type="protein sequence ID" value="BAC40083.1"/>
    <property type="molecule type" value="mRNA"/>
</dbReference>
<dbReference type="EMBL" id="AK169088">
    <property type="protein sequence ID" value="BAE40872.1"/>
    <property type="molecule type" value="mRNA"/>
</dbReference>
<dbReference type="EMBL" id="BC006787">
    <property type="protein sequence ID" value="AAH06787.1"/>
    <property type="molecule type" value="mRNA"/>
</dbReference>
<dbReference type="CCDS" id="CCDS15602.1"/>
<dbReference type="RefSeq" id="NP_080317.3">
    <property type="nucleotide sequence ID" value="NM_026041.2"/>
</dbReference>
<dbReference type="SMR" id="Q9CYX7"/>
<dbReference type="BioGRID" id="212028">
    <property type="interactions" value="3"/>
</dbReference>
<dbReference type="FunCoup" id="Q9CYX7">
    <property type="interactions" value="430"/>
</dbReference>
<dbReference type="IntAct" id="Q9CYX7">
    <property type="interactions" value="1"/>
</dbReference>
<dbReference type="MINT" id="Q9CYX7"/>
<dbReference type="STRING" id="10090.ENSMUSP00000001339"/>
<dbReference type="iPTMnet" id="Q9CYX7"/>
<dbReference type="PhosphoSitePlus" id="Q9CYX7"/>
<dbReference type="jPOST" id="Q9CYX7"/>
<dbReference type="PaxDb" id="10090-ENSMUSP00000001339"/>
<dbReference type="PeptideAtlas" id="Q9CYX7"/>
<dbReference type="ProteomicsDB" id="260844"/>
<dbReference type="Pumba" id="Q9CYX7"/>
<dbReference type="Antibodypedia" id="20731">
    <property type="antibodies" value="72 antibodies from 15 providers"/>
</dbReference>
<dbReference type="DNASU" id="67223"/>
<dbReference type="Ensembl" id="ENSMUST00000001339.6">
    <property type="protein sequence ID" value="ENSMUSP00000001339.6"/>
    <property type="gene ID" value="ENSMUSG00000001305.6"/>
</dbReference>
<dbReference type="GeneID" id="67223"/>
<dbReference type="KEGG" id="mmu:67223"/>
<dbReference type="UCSC" id="uc007dzq.2">
    <property type="organism name" value="mouse"/>
</dbReference>
<dbReference type="AGR" id="MGI:1914473"/>
<dbReference type="CTD" id="51018"/>
<dbReference type="MGI" id="MGI:1914473">
    <property type="gene designation" value="Rrp15"/>
</dbReference>
<dbReference type="VEuPathDB" id="HostDB:ENSMUSG00000001305"/>
<dbReference type="eggNOG" id="KOG2974">
    <property type="taxonomic scope" value="Eukaryota"/>
</dbReference>
<dbReference type="GeneTree" id="ENSGT00390000001960"/>
<dbReference type="HOGENOM" id="CLU_079732_0_0_1"/>
<dbReference type="InParanoid" id="Q9CYX7"/>
<dbReference type="OMA" id="FVKQRFY"/>
<dbReference type="OrthoDB" id="20949at2759"/>
<dbReference type="PhylomeDB" id="Q9CYX7"/>
<dbReference type="TreeFam" id="TF106119"/>
<dbReference type="BioGRID-ORCS" id="67223">
    <property type="hits" value="21 hits in 77 CRISPR screens"/>
</dbReference>
<dbReference type="PRO" id="PR:Q9CYX7"/>
<dbReference type="Proteomes" id="UP000000589">
    <property type="component" value="Chromosome 1"/>
</dbReference>
<dbReference type="RNAct" id="Q9CYX7">
    <property type="molecule type" value="protein"/>
</dbReference>
<dbReference type="Bgee" id="ENSMUSG00000001305">
    <property type="expression patterns" value="Expressed in dorsal pancreas and 253 other cell types or tissues"/>
</dbReference>
<dbReference type="GO" id="GO:0006364">
    <property type="term" value="P:rRNA processing"/>
    <property type="evidence" value="ECO:0007669"/>
    <property type="project" value="InterPro"/>
</dbReference>
<dbReference type="InterPro" id="IPR012459">
    <property type="entry name" value="Rrp15"/>
</dbReference>
<dbReference type="PANTHER" id="PTHR13245">
    <property type="entry name" value="RRP15-LIKE PROTEIN"/>
    <property type="match status" value="1"/>
</dbReference>
<dbReference type="PANTHER" id="PTHR13245:SF14">
    <property type="entry name" value="RRP15-LIKE PROTEIN"/>
    <property type="match status" value="1"/>
</dbReference>
<dbReference type="Pfam" id="PF07890">
    <property type="entry name" value="Rrp15p"/>
    <property type="match status" value="1"/>
</dbReference>
<keyword id="KW-0007">Acetylation</keyword>
<keyword id="KW-0164">Citrullination</keyword>
<keyword id="KW-0175">Coiled coil</keyword>
<keyword id="KW-1017">Isopeptide bond</keyword>
<keyword id="KW-0597">Phosphoprotein</keyword>
<keyword id="KW-1185">Reference proteome</keyword>
<keyword id="KW-0832">Ubl conjugation</keyword>
<reference key="1">
    <citation type="journal article" date="2005" name="Science">
        <title>The transcriptional landscape of the mammalian genome.</title>
        <authorList>
            <person name="Carninci P."/>
            <person name="Kasukawa T."/>
            <person name="Katayama S."/>
            <person name="Gough J."/>
            <person name="Frith M.C."/>
            <person name="Maeda N."/>
            <person name="Oyama R."/>
            <person name="Ravasi T."/>
            <person name="Lenhard B."/>
            <person name="Wells C."/>
            <person name="Kodzius R."/>
            <person name="Shimokawa K."/>
            <person name="Bajic V.B."/>
            <person name="Brenner S.E."/>
            <person name="Batalov S."/>
            <person name="Forrest A.R."/>
            <person name="Zavolan M."/>
            <person name="Davis M.J."/>
            <person name="Wilming L.G."/>
            <person name="Aidinis V."/>
            <person name="Allen J.E."/>
            <person name="Ambesi-Impiombato A."/>
            <person name="Apweiler R."/>
            <person name="Aturaliya R.N."/>
            <person name="Bailey T.L."/>
            <person name="Bansal M."/>
            <person name="Baxter L."/>
            <person name="Beisel K.W."/>
            <person name="Bersano T."/>
            <person name="Bono H."/>
            <person name="Chalk A.M."/>
            <person name="Chiu K.P."/>
            <person name="Choudhary V."/>
            <person name="Christoffels A."/>
            <person name="Clutterbuck D.R."/>
            <person name="Crowe M.L."/>
            <person name="Dalla E."/>
            <person name="Dalrymple B.P."/>
            <person name="de Bono B."/>
            <person name="Della Gatta G."/>
            <person name="di Bernardo D."/>
            <person name="Down T."/>
            <person name="Engstrom P."/>
            <person name="Fagiolini M."/>
            <person name="Faulkner G."/>
            <person name="Fletcher C.F."/>
            <person name="Fukushima T."/>
            <person name="Furuno M."/>
            <person name="Futaki S."/>
            <person name="Gariboldi M."/>
            <person name="Georgii-Hemming P."/>
            <person name="Gingeras T.R."/>
            <person name="Gojobori T."/>
            <person name="Green R.E."/>
            <person name="Gustincich S."/>
            <person name="Harbers M."/>
            <person name="Hayashi Y."/>
            <person name="Hensch T.K."/>
            <person name="Hirokawa N."/>
            <person name="Hill D."/>
            <person name="Huminiecki L."/>
            <person name="Iacono M."/>
            <person name="Ikeo K."/>
            <person name="Iwama A."/>
            <person name="Ishikawa T."/>
            <person name="Jakt M."/>
            <person name="Kanapin A."/>
            <person name="Katoh M."/>
            <person name="Kawasawa Y."/>
            <person name="Kelso J."/>
            <person name="Kitamura H."/>
            <person name="Kitano H."/>
            <person name="Kollias G."/>
            <person name="Krishnan S.P."/>
            <person name="Kruger A."/>
            <person name="Kummerfeld S.K."/>
            <person name="Kurochkin I.V."/>
            <person name="Lareau L.F."/>
            <person name="Lazarevic D."/>
            <person name="Lipovich L."/>
            <person name="Liu J."/>
            <person name="Liuni S."/>
            <person name="McWilliam S."/>
            <person name="Madan Babu M."/>
            <person name="Madera M."/>
            <person name="Marchionni L."/>
            <person name="Matsuda H."/>
            <person name="Matsuzawa S."/>
            <person name="Miki H."/>
            <person name="Mignone F."/>
            <person name="Miyake S."/>
            <person name="Morris K."/>
            <person name="Mottagui-Tabar S."/>
            <person name="Mulder N."/>
            <person name="Nakano N."/>
            <person name="Nakauchi H."/>
            <person name="Ng P."/>
            <person name="Nilsson R."/>
            <person name="Nishiguchi S."/>
            <person name="Nishikawa S."/>
            <person name="Nori F."/>
            <person name="Ohara O."/>
            <person name="Okazaki Y."/>
            <person name="Orlando V."/>
            <person name="Pang K.C."/>
            <person name="Pavan W.J."/>
            <person name="Pavesi G."/>
            <person name="Pesole G."/>
            <person name="Petrovsky N."/>
            <person name="Piazza S."/>
            <person name="Reed J."/>
            <person name="Reid J.F."/>
            <person name="Ring B.Z."/>
            <person name="Ringwald M."/>
            <person name="Rost B."/>
            <person name="Ruan Y."/>
            <person name="Salzberg S.L."/>
            <person name="Sandelin A."/>
            <person name="Schneider C."/>
            <person name="Schoenbach C."/>
            <person name="Sekiguchi K."/>
            <person name="Semple C.A."/>
            <person name="Seno S."/>
            <person name="Sessa L."/>
            <person name="Sheng Y."/>
            <person name="Shibata Y."/>
            <person name="Shimada H."/>
            <person name="Shimada K."/>
            <person name="Silva D."/>
            <person name="Sinclair B."/>
            <person name="Sperling S."/>
            <person name="Stupka E."/>
            <person name="Sugiura K."/>
            <person name="Sultana R."/>
            <person name="Takenaka Y."/>
            <person name="Taki K."/>
            <person name="Tammoja K."/>
            <person name="Tan S.L."/>
            <person name="Tang S."/>
            <person name="Taylor M.S."/>
            <person name="Tegner J."/>
            <person name="Teichmann S.A."/>
            <person name="Ueda H.R."/>
            <person name="van Nimwegen E."/>
            <person name="Verardo R."/>
            <person name="Wei C.L."/>
            <person name="Yagi K."/>
            <person name="Yamanishi H."/>
            <person name="Zabarovsky E."/>
            <person name="Zhu S."/>
            <person name="Zimmer A."/>
            <person name="Hide W."/>
            <person name="Bult C."/>
            <person name="Grimmond S.M."/>
            <person name="Teasdale R.D."/>
            <person name="Liu E.T."/>
            <person name="Brusic V."/>
            <person name="Quackenbush J."/>
            <person name="Wahlestedt C."/>
            <person name="Mattick J.S."/>
            <person name="Hume D.A."/>
            <person name="Kai C."/>
            <person name="Sasaki D."/>
            <person name="Tomaru Y."/>
            <person name="Fukuda S."/>
            <person name="Kanamori-Katayama M."/>
            <person name="Suzuki M."/>
            <person name="Aoki J."/>
            <person name="Arakawa T."/>
            <person name="Iida J."/>
            <person name="Imamura K."/>
            <person name="Itoh M."/>
            <person name="Kato T."/>
            <person name="Kawaji H."/>
            <person name="Kawagashira N."/>
            <person name="Kawashima T."/>
            <person name="Kojima M."/>
            <person name="Kondo S."/>
            <person name="Konno H."/>
            <person name="Nakano K."/>
            <person name="Ninomiya N."/>
            <person name="Nishio T."/>
            <person name="Okada M."/>
            <person name="Plessy C."/>
            <person name="Shibata K."/>
            <person name="Shiraki T."/>
            <person name="Suzuki S."/>
            <person name="Tagami M."/>
            <person name="Waki K."/>
            <person name="Watahiki A."/>
            <person name="Okamura-Oho Y."/>
            <person name="Suzuki H."/>
            <person name="Kawai J."/>
            <person name="Hayashizaki Y."/>
        </authorList>
    </citation>
    <scope>NUCLEOTIDE SEQUENCE [LARGE SCALE MRNA]</scope>
    <source>
        <strain>C57BL/6J</strain>
        <tissue>Liver</tissue>
        <tissue>Pancreas</tissue>
        <tissue>Thymus</tissue>
    </source>
</reference>
<reference key="2">
    <citation type="journal article" date="2004" name="Genome Res.">
        <title>The status, quality, and expansion of the NIH full-length cDNA project: the Mammalian Gene Collection (MGC).</title>
        <authorList>
            <consortium name="The MGC Project Team"/>
        </authorList>
    </citation>
    <scope>NUCLEOTIDE SEQUENCE [LARGE SCALE MRNA]</scope>
    <source>
        <strain>Czech II</strain>
        <tissue>Mammary tumor</tissue>
    </source>
</reference>
<reference key="3">
    <citation type="journal article" date="2007" name="Proc. Natl. Acad. Sci. U.S.A.">
        <title>Large-scale phosphorylation analysis of mouse liver.</title>
        <authorList>
            <person name="Villen J."/>
            <person name="Beausoleil S.A."/>
            <person name="Gerber S.A."/>
            <person name="Gygi S.P."/>
        </authorList>
    </citation>
    <scope>PHOSPHORYLATION [LARGE SCALE ANALYSIS] AT SER-265</scope>
    <scope>IDENTIFICATION BY MASS SPECTROMETRY [LARGE SCALE ANALYSIS]</scope>
    <source>
        <tissue>Liver</tissue>
    </source>
</reference>
<reference key="4">
    <citation type="journal article" date="2010" name="Cell">
        <title>A tissue-specific atlas of mouse protein phosphorylation and expression.</title>
        <authorList>
            <person name="Huttlin E.L."/>
            <person name="Jedrychowski M.P."/>
            <person name="Elias J.E."/>
            <person name="Goswami T."/>
            <person name="Rad R."/>
            <person name="Beausoleil S.A."/>
            <person name="Villen J."/>
            <person name="Haas W."/>
            <person name="Sowa M.E."/>
            <person name="Gygi S.P."/>
        </authorList>
    </citation>
    <scope>PHOSPHORYLATION [LARGE SCALE ANALYSIS] AT SER-265</scope>
    <scope>IDENTIFICATION BY MASS SPECTROMETRY [LARGE SCALE ANALYSIS]</scope>
    <source>
        <tissue>Brain</tissue>
        <tissue>Kidney</tissue>
        <tissue>Lung</tissue>
        <tissue>Spleen</tissue>
    </source>
</reference>
<reference key="5">
    <citation type="journal article" date="2014" name="Nature">
        <title>Citrullination regulates pluripotency and histone H1 binding to chromatin.</title>
        <authorList>
            <person name="Christophorou M.A."/>
            <person name="Castelo-Branco G."/>
            <person name="Halley-Stott R.P."/>
            <person name="Oliveira C.S."/>
            <person name="Loos R."/>
            <person name="Radzisheuskaya A."/>
            <person name="Mowen K.A."/>
            <person name="Bertone P."/>
            <person name="Silva J.C."/>
            <person name="Zernicka-Goetz M."/>
            <person name="Nielsen M.L."/>
            <person name="Gurdon J.B."/>
            <person name="Kouzarides T."/>
        </authorList>
    </citation>
    <scope>CITRULLINATION AT ARG-9</scope>
</reference>
<protein>
    <recommendedName>
        <fullName>RRP15-like protein</fullName>
    </recommendedName>
    <alternativeName>
        <fullName>Ribosomal RNA-processing protein 15</fullName>
    </alternativeName>
</protein>
<feature type="initiator methionine" description="Removed" evidence="1">
    <location>
        <position position="1"/>
    </location>
</feature>
<feature type="chain" id="PRO_0000273214" description="RRP15-like protein">
    <location>
        <begin position="2"/>
        <end position="281"/>
    </location>
</feature>
<feature type="region of interest" description="Disordered" evidence="3">
    <location>
        <begin position="1"/>
        <end position="115"/>
    </location>
</feature>
<feature type="region of interest" description="Disordered" evidence="3">
    <location>
        <begin position="214"/>
        <end position="281"/>
    </location>
</feature>
<feature type="coiled-coil region" evidence="2">
    <location>
        <begin position="63"/>
        <end position="144"/>
    </location>
</feature>
<feature type="compositionally biased region" description="Basic residues" evidence="3">
    <location>
        <begin position="18"/>
        <end position="28"/>
    </location>
</feature>
<feature type="compositionally biased region" description="Basic and acidic residues" evidence="3">
    <location>
        <begin position="36"/>
        <end position="45"/>
    </location>
</feature>
<feature type="compositionally biased region" description="Acidic residues" evidence="3">
    <location>
        <begin position="61"/>
        <end position="82"/>
    </location>
</feature>
<feature type="compositionally biased region" description="Basic and acidic residues" evidence="3">
    <location>
        <begin position="233"/>
        <end position="252"/>
    </location>
</feature>
<feature type="compositionally biased region" description="Low complexity" evidence="3">
    <location>
        <begin position="272"/>
        <end position="281"/>
    </location>
</feature>
<feature type="modified residue" description="N-acetylalanine" evidence="1">
    <location>
        <position position="2"/>
    </location>
</feature>
<feature type="modified residue" description="Citrulline" evidence="4">
    <location>
        <position position="9"/>
    </location>
</feature>
<feature type="modified residue" description="Phosphoserine" evidence="1">
    <location>
        <position position="11"/>
    </location>
</feature>
<feature type="modified residue" description="Phosphoserine" evidence="1">
    <location>
        <position position="58"/>
    </location>
</feature>
<feature type="modified residue" description="Phosphoserine" evidence="1">
    <location>
        <position position="67"/>
    </location>
</feature>
<feature type="modified residue" description="Phosphothreonine" evidence="1">
    <location>
        <position position="104"/>
    </location>
</feature>
<feature type="modified residue" description="Phosphoserine" evidence="1">
    <location>
        <position position="206"/>
    </location>
</feature>
<feature type="modified residue" description="Phosphoserine" evidence="6 7">
    <location>
        <position position="265"/>
    </location>
</feature>
<feature type="cross-link" description="Glycyl lysine isopeptide (Lys-Gly) (interchain with G-Cter in SUMO2)" evidence="1">
    <location>
        <position position="108"/>
    </location>
</feature>
<feature type="cross-link" description="Glycyl lysine isopeptide (Lys-Gly) (interchain with G-Cter in SUMO2)" evidence="1">
    <location>
        <position position="179"/>
    </location>
</feature>
<feature type="cross-link" description="Glycyl lysine isopeptide (Lys-Gly) (interchain with G-Cter in SUMO2)" evidence="1">
    <location>
        <position position="208"/>
    </location>
</feature>
<feature type="cross-link" description="Glycyl lysine isopeptide (Lys-Gly) (interchain with G-Cter in SUMO1); alternate" evidence="1">
    <location>
        <position position="238"/>
    </location>
</feature>
<feature type="cross-link" description="Glycyl lysine isopeptide (Lys-Gly) (interchain with G-Cter in SUMO2); alternate" evidence="1">
    <location>
        <position position="238"/>
    </location>
</feature>
<feature type="sequence conflict" description="In Ref. 1; BAB25137." evidence="5" ref="1">
    <original>A</original>
    <variation>G</variation>
    <location>
        <position position="2"/>
    </location>
</feature>
<feature type="sequence conflict" description="In Ref. 1; BAB25137." evidence="5" ref="1">
    <original>A</original>
    <variation>G</variation>
    <location>
        <position position="3"/>
    </location>
</feature>
<feature type="sequence conflict" description="In Ref. 1; BAB25137." evidence="5" ref="1">
    <original>D</original>
    <variation>G</variation>
    <location>
        <position position="7"/>
    </location>
</feature>
<feature type="sequence conflict" description="In Ref. 2; AAH06787." evidence="5" ref="2">
    <original>I</original>
    <variation>M</variation>
    <location>
        <position position="15"/>
    </location>
</feature>
<feature type="sequence conflict" description="In Ref. 2; AAH06787." evidence="5" ref="2">
    <original>E</original>
    <variation>D</variation>
    <location>
        <position position="54"/>
    </location>
</feature>
<feature type="sequence conflict" description="In Ref. 1; BAC40083." evidence="5" ref="1">
    <original>A</original>
    <variation>V</variation>
    <location>
        <position position="82"/>
    </location>
</feature>
<feature type="sequence conflict" description="In Ref. 1; BAB25137." evidence="5" ref="1">
    <original>A</original>
    <variation>D</variation>
    <location>
        <position position="97"/>
    </location>
</feature>
<feature type="sequence conflict" description="In Ref. 1; BAC40083." evidence="5" ref="1">
    <original>E</original>
    <variation>Q</variation>
    <location>
        <position position="117"/>
    </location>
</feature>
<proteinExistence type="evidence at protein level"/>
<name>RRP15_MOUSE</name>
<organism>
    <name type="scientific">Mus musculus</name>
    <name type="common">Mouse</name>
    <dbReference type="NCBI Taxonomy" id="10090"/>
    <lineage>
        <taxon>Eukaryota</taxon>
        <taxon>Metazoa</taxon>
        <taxon>Chordata</taxon>
        <taxon>Craniata</taxon>
        <taxon>Vertebrata</taxon>
        <taxon>Euteleostomi</taxon>
        <taxon>Mammalia</taxon>
        <taxon>Eutheria</taxon>
        <taxon>Euarchontoglires</taxon>
        <taxon>Glires</taxon>
        <taxon>Rodentia</taxon>
        <taxon>Myomorpha</taxon>
        <taxon>Muroidea</taxon>
        <taxon>Muridae</taxon>
        <taxon>Murinae</taxon>
        <taxon>Mus</taxon>
        <taxon>Mus</taxon>
    </lineage>
</organism>
<evidence type="ECO:0000250" key="1">
    <source>
        <dbReference type="UniProtKB" id="Q9Y3B9"/>
    </source>
</evidence>
<evidence type="ECO:0000255" key="2"/>
<evidence type="ECO:0000256" key="3">
    <source>
        <dbReference type="SAM" id="MobiDB-lite"/>
    </source>
</evidence>
<evidence type="ECO:0000269" key="4">
    <source>
    </source>
</evidence>
<evidence type="ECO:0000305" key="5"/>
<evidence type="ECO:0007744" key="6">
    <source>
    </source>
</evidence>
<evidence type="ECO:0007744" key="7">
    <source>
    </source>
</evidence>
<comment type="PTM">
    <text evidence="4">Citrullinated by PADI4.</text>
</comment>
<comment type="similarity">
    <text evidence="5">Belongs to the RRP15 family.</text>
</comment>
<sequence>MAAAVQDSRVSPGEILKRSPKKKKKMKMVAKAAASKLEDEVKDSSDGEGSCDSEMDHSDDGAAEADSEDNVESCEEDNEDAAESSAGTNSGWADAMAKILNKKTPKSKATILTKNKELEKEKEKLKQERLEKRKQLDKKREWEMLCRVKPDVVKDKEAERNLQRIATRGVVQLFNAVQKHQRNVGEKVKEAGGSVRKRAKLMSTVSKKDFISVLRGMDGTSRNSPAGKSPKARQTEVKSEESPGWKILRDDFMMGASMKDWDKESEGEEPAGGRAEAAASR</sequence>